<evidence type="ECO:0000250" key="1">
    <source>
        <dbReference type="UniProtKB" id="Q8N2K0"/>
    </source>
</evidence>
<evidence type="ECO:0000250" key="2">
    <source>
        <dbReference type="UniProtKB" id="Q99LR1"/>
    </source>
</evidence>
<evidence type="ECO:0000255" key="3"/>
<evidence type="ECO:0000255" key="4">
    <source>
        <dbReference type="PROSITE-ProRule" id="PRU00498"/>
    </source>
</evidence>
<evidence type="ECO:0000305" key="5"/>
<name>ABD12_XENTR</name>
<protein>
    <recommendedName>
        <fullName evidence="5">Lysophosphatidylserine lipase ABHD12</fullName>
        <ecNumber evidence="1">3.1.-.-</ecNumber>
    </recommendedName>
    <alternativeName>
        <fullName evidence="5">2-arachidonoylglycerol hydrolase ABHD12</fullName>
    </alternativeName>
    <alternativeName>
        <fullName evidence="5">Abhydrolase domain-containing protein 12</fullName>
    </alternativeName>
    <alternativeName>
        <fullName evidence="5">Monoacylglycerol lipase ABHD12</fullName>
        <ecNumber evidence="1">3.1.1.23</ecNumber>
    </alternativeName>
    <alternativeName>
        <fullName evidence="5">Oxidized phosphatidylserine lipase ABHD12</fullName>
        <ecNumber evidence="1">3.1.-.-</ecNumber>
    </alternativeName>
</protein>
<sequence>MRKRAEPVPPEHESFGRAPLDRECSIKQKLRIPGTKGHYPHDSDCDSKGMKRFGRRYGLWSRLRMFLIFLLGLYIAIPFLVKICPAIQTQLVFLNLVRFPYFIDLKRPEDQGLNHTCNFYLQPEEDVSIGVWHTVPAVLWKDAQGKDLEWYEEVLSTSYPVILYLHGNAGTRGGDHRVQLYKVLSSMGYHVISFDYRGWGDSVGSPSESGMTYDALHVFDWIKARSGDNPVYIWGHSLGTGVATNLVRRLCERETPPDSLILESPFTNIREEAKSHPFSVIYRYFPGFDWFFLDPITASGIKFANDDNVKYISCPLLILHAEDDPVIPFHLGKKLYNIAAPARSLRDYKVQFVPFHKDLGYRHKYIYRSPELRQILRDFLGNTEQQ</sequence>
<organism>
    <name type="scientific">Xenopus tropicalis</name>
    <name type="common">Western clawed frog</name>
    <name type="synonym">Silurana tropicalis</name>
    <dbReference type="NCBI Taxonomy" id="8364"/>
    <lineage>
        <taxon>Eukaryota</taxon>
        <taxon>Metazoa</taxon>
        <taxon>Chordata</taxon>
        <taxon>Craniata</taxon>
        <taxon>Vertebrata</taxon>
        <taxon>Euteleostomi</taxon>
        <taxon>Amphibia</taxon>
        <taxon>Batrachia</taxon>
        <taxon>Anura</taxon>
        <taxon>Pipoidea</taxon>
        <taxon>Pipidae</taxon>
        <taxon>Xenopodinae</taxon>
        <taxon>Xenopus</taxon>
        <taxon>Silurana</taxon>
    </lineage>
</organism>
<gene>
    <name evidence="1" type="primary">abhd12</name>
</gene>
<reference key="1">
    <citation type="submission" date="2008-07" db="EMBL/GenBank/DDBJ databases">
        <authorList>
            <consortium name="NIH - Xenopus Gene Collection (XGC) project"/>
        </authorList>
    </citation>
    <scope>NUCLEOTIDE SEQUENCE [LARGE SCALE MRNA]</scope>
    <source>
        <tissue>Testis</tissue>
    </source>
</reference>
<keyword id="KW-0256">Endoplasmic reticulum</keyword>
<keyword id="KW-0325">Glycoprotein</keyword>
<keyword id="KW-0378">Hydrolase</keyword>
<keyword id="KW-0443">Lipid metabolism</keyword>
<keyword id="KW-0472">Membrane</keyword>
<keyword id="KW-1185">Reference proteome</keyword>
<keyword id="KW-0812">Transmembrane</keyword>
<keyword id="KW-1133">Transmembrane helix</keyword>
<accession>B4F753</accession>
<feature type="chain" id="PRO_0000375812" description="Lysophosphatidylserine lipase ABHD12">
    <location>
        <begin position="1"/>
        <end position="386"/>
    </location>
</feature>
<feature type="topological domain" description="Cytoplasmic" evidence="2">
    <location>
        <begin position="1"/>
        <end position="66"/>
    </location>
</feature>
<feature type="transmembrane region" description="Helical" evidence="2">
    <location>
        <begin position="67"/>
        <end position="87"/>
    </location>
</feature>
<feature type="topological domain" description="Extracellular" evidence="2">
    <location>
        <begin position="88"/>
        <end position="386"/>
    </location>
</feature>
<feature type="active site" description="Nucleophile" evidence="1">
    <location>
        <position position="237"/>
    </location>
</feature>
<feature type="active site" description="Charge relay system" evidence="1">
    <location>
        <position position="324"/>
    </location>
</feature>
<feature type="active site" description="Charge relay system" evidence="1">
    <location>
        <position position="363"/>
    </location>
</feature>
<feature type="glycosylation site" description="N-linked (GlcNAc...) asparagine" evidence="4">
    <location>
        <position position="114"/>
    </location>
</feature>
<proteinExistence type="evidence at transcript level"/>
<comment type="function">
    <text evidence="1 2">Lysophosphatidylserine (LPS) lipase that mediates the hydrolysis of lysophosphatidylserine, a class of signaling lipids that regulates immunological and neurological processes (By similarity). Represents a major lysophosphatidylserine lipase in the brain, thereby playing a key role in the central nervous system (By similarity). Also able to hydrolyze oxidized phosphatidylserine; oxidized phosphatidylserine is produced in response to severe inflammatory stress and constitutes a proapoptotic 'eat me' signal. Also has monoacylglycerol (MAG) lipase activity: hydrolyzes 2-arachidonoylglycerol (2-AG), thereby acting as a regulator of endocannabinoid signaling pathways. Has a strong preference for very-long-chain lipid substrates; substrate specificity is likely due to improved catalysis and not improved substrate binding (By similarity).</text>
</comment>
<comment type="catalytic activity">
    <reaction evidence="1">
        <text>1-(9Z-octadecenoyl)-sn-glycero-3-phospho-L-serine + H2O = sn-glycero-3-phospho-L-serine + (9Z)-octadecenoate + H(+)</text>
        <dbReference type="Rhea" id="RHEA:40499"/>
        <dbReference type="ChEBI" id="CHEBI:15377"/>
        <dbReference type="ChEBI" id="CHEBI:15378"/>
        <dbReference type="ChEBI" id="CHEBI:30823"/>
        <dbReference type="ChEBI" id="CHEBI:64765"/>
        <dbReference type="ChEBI" id="CHEBI:74617"/>
    </reaction>
</comment>
<comment type="catalytic activity">
    <reaction evidence="2">
        <text>1-(9Z-octadecenoyl)-sn-glycero-3-phospho-(1'-sn-glycerol) + H2O = sn-glycero-3-phospho-(1'-sn-glycerol) + (9Z)-octadecenoate + H(+)</text>
        <dbReference type="Rhea" id="RHEA:44584"/>
        <dbReference type="ChEBI" id="CHEBI:15377"/>
        <dbReference type="ChEBI" id="CHEBI:15378"/>
        <dbReference type="ChEBI" id="CHEBI:30823"/>
        <dbReference type="ChEBI" id="CHEBI:64717"/>
        <dbReference type="ChEBI" id="CHEBI:72828"/>
    </reaction>
</comment>
<comment type="catalytic activity">
    <reaction evidence="2">
        <text>1-(9Z-octadecenoyl)-sn-glycero-3-phospho-(1D-myo-inositol) + H2O = sn-glycero-3-phospho-1D-myo-inositol + (9Z)-octadecenoate + H(+)</text>
        <dbReference type="Rhea" id="RHEA:44588"/>
        <dbReference type="ChEBI" id="CHEBI:15377"/>
        <dbReference type="ChEBI" id="CHEBI:15378"/>
        <dbReference type="ChEBI" id="CHEBI:30823"/>
        <dbReference type="ChEBI" id="CHEBI:58444"/>
        <dbReference type="ChEBI" id="CHEBI:78762"/>
    </reaction>
</comment>
<comment type="catalytic activity">
    <reaction evidence="2">
        <text>1-(9Z-octadecenoyl)-sn-glycero-3-phosphoethanolamine + H2O = sn-glycero-3-phosphoethanolamine + (9Z)-octadecenoate + H(+)</text>
        <dbReference type="Rhea" id="RHEA:40895"/>
        <dbReference type="ChEBI" id="CHEBI:15377"/>
        <dbReference type="ChEBI" id="CHEBI:15378"/>
        <dbReference type="ChEBI" id="CHEBI:30823"/>
        <dbReference type="ChEBI" id="CHEBI:74971"/>
        <dbReference type="ChEBI" id="CHEBI:143890"/>
    </reaction>
</comment>
<comment type="catalytic activity">
    <reaction evidence="2">
        <text>1-(9Z-octadecenoyl)-sn-glycero-3-phosphocholine + H2O = 1-(9Z-octadecenoyl)-sn-glycerol + phosphocholine + H(+)</text>
        <dbReference type="Rhea" id="RHEA:41091"/>
        <dbReference type="ChEBI" id="CHEBI:15377"/>
        <dbReference type="ChEBI" id="CHEBI:15378"/>
        <dbReference type="ChEBI" id="CHEBI:28610"/>
        <dbReference type="ChEBI" id="CHEBI:75757"/>
        <dbReference type="ChEBI" id="CHEBI:295975"/>
    </reaction>
</comment>
<comment type="catalytic activity">
    <reaction evidence="1">
        <text>2-(9Z-octadecenoyl)-glycerol + H2O = glycerol + (9Z)-octadecenoate + H(+)</text>
        <dbReference type="Rhea" id="RHEA:38491"/>
        <dbReference type="ChEBI" id="CHEBI:15377"/>
        <dbReference type="ChEBI" id="CHEBI:15378"/>
        <dbReference type="ChEBI" id="CHEBI:17754"/>
        <dbReference type="ChEBI" id="CHEBI:30823"/>
        <dbReference type="ChEBI" id="CHEBI:73990"/>
    </reaction>
</comment>
<comment type="catalytic activity">
    <reaction evidence="1">
        <text>1-hexadecanoyl-sn-glycero-3-phospho-L-serine + H2O = sn-glycero-3-phospho-L-serine + hexadecanoate + H(+)</text>
        <dbReference type="Rhea" id="RHEA:44552"/>
        <dbReference type="ChEBI" id="CHEBI:7896"/>
        <dbReference type="ChEBI" id="CHEBI:15377"/>
        <dbReference type="ChEBI" id="CHEBI:15378"/>
        <dbReference type="ChEBI" id="CHEBI:64765"/>
        <dbReference type="ChEBI" id="CHEBI:75020"/>
    </reaction>
</comment>
<comment type="catalytic activity">
    <reaction evidence="1">
        <text>2-(5Z,8Z,11Z,14Z-eicosatetraenoyl)-glycerol + H2O = glycerol + (5Z,8Z,11Z,14Z)-eicosatetraenoate + H(+)</text>
        <dbReference type="Rhea" id="RHEA:26132"/>
        <dbReference type="ChEBI" id="CHEBI:15377"/>
        <dbReference type="ChEBI" id="CHEBI:15378"/>
        <dbReference type="ChEBI" id="CHEBI:17754"/>
        <dbReference type="ChEBI" id="CHEBI:32395"/>
        <dbReference type="ChEBI" id="CHEBI:52392"/>
    </reaction>
</comment>
<comment type="catalytic activity">
    <reaction evidence="1">
        <text>Hydrolyzes glycerol monoesters of long-chain fatty acids.</text>
        <dbReference type="EC" id="3.1.1.23"/>
    </reaction>
</comment>
<comment type="catalytic activity">
    <reaction evidence="1">
        <text>1-decanoylglycerol + H2O = decanoate + glycerol + H(+)</text>
        <dbReference type="Rhea" id="RHEA:44320"/>
        <dbReference type="ChEBI" id="CHEBI:15377"/>
        <dbReference type="ChEBI" id="CHEBI:15378"/>
        <dbReference type="ChEBI" id="CHEBI:17754"/>
        <dbReference type="ChEBI" id="CHEBI:27689"/>
        <dbReference type="ChEBI" id="CHEBI:75547"/>
    </reaction>
</comment>
<comment type="catalytic activity">
    <reaction evidence="1">
        <text>1-dodecanoylglycerol + H2O = dodecanoate + glycerol + H(+)</text>
        <dbReference type="Rhea" id="RHEA:44316"/>
        <dbReference type="ChEBI" id="CHEBI:15377"/>
        <dbReference type="ChEBI" id="CHEBI:15378"/>
        <dbReference type="ChEBI" id="CHEBI:17754"/>
        <dbReference type="ChEBI" id="CHEBI:18262"/>
        <dbReference type="ChEBI" id="CHEBI:75539"/>
    </reaction>
</comment>
<comment type="catalytic activity">
    <reaction evidence="1">
        <text>1-tetradecanoylglycerol + H2O = tetradecanoate + glycerol + H(+)</text>
        <dbReference type="Rhea" id="RHEA:44312"/>
        <dbReference type="ChEBI" id="CHEBI:15377"/>
        <dbReference type="ChEBI" id="CHEBI:15378"/>
        <dbReference type="ChEBI" id="CHEBI:17754"/>
        <dbReference type="ChEBI" id="CHEBI:30807"/>
        <dbReference type="ChEBI" id="CHEBI:75562"/>
    </reaction>
</comment>
<comment type="catalytic activity">
    <reaction evidence="1">
        <text>2-hexadecanoylglycerol + H2O = glycerol + hexadecanoate + H(+)</text>
        <dbReference type="Rhea" id="RHEA:39963"/>
        <dbReference type="ChEBI" id="CHEBI:7896"/>
        <dbReference type="ChEBI" id="CHEBI:15377"/>
        <dbReference type="ChEBI" id="CHEBI:15378"/>
        <dbReference type="ChEBI" id="CHEBI:17754"/>
        <dbReference type="ChEBI" id="CHEBI:75455"/>
    </reaction>
</comment>
<comment type="catalytic activity">
    <reaction evidence="1">
        <text>1-(9Z-octadecenoyl)-glycerol + H2O = glycerol + (9Z)-octadecenoate + H(+)</text>
        <dbReference type="Rhea" id="RHEA:38487"/>
        <dbReference type="ChEBI" id="CHEBI:15377"/>
        <dbReference type="ChEBI" id="CHEBI:15378"/>
        <dbReference type="ChEBI" id="CHEBI:17754"/>
        <dbReference type="ChEBI" id="CHEBI:30823"/>
        <dbReference type="ChEBI" id="CHEBI:75342"/>
    </reaction>
</comment>
<comment type="catalytic activity">
    <reaction evidence="1">
        <text>2-(9Z,12Z-octadecadienoyl)-glycerol + H2O = (9Z,12Z)-octadecadienoate + glycerol + H(+)</text>
        <dbReference type="Rhea" id="RHEA:44732"/>
        <dbReference type="ChEBI" id="CHEBI:15377"/>
        <dbReference type="ChEBI" id="CHEBI:15378"/>
        <dbReference type="ChEBI" id="CHEBI:17754"/>
        <dbReference type="ChEBI" id="CHEBI:30245"/>
        <dbReference type="ChEBI" id="CHEBI:75457"/>
    </reaction>
</comment>
<comment type="catalytic activity">
    <reaction evidence="1">
        <text>1-(5Z,8Z,11Z,14Z-eicosatetraenoyl)-glycerol + H2O = glycerol + (5Z,8Z,11Z,14Z)-eicosatetraenoate + H(+)</text>
        <dbReference type="Rhea" id="RHEA:44728"/>
        <dbReference type="ChEBI" id="CHEBI:15377"/>
        <dbReference type="ChEBI" id="CHEBI:15378"/>
        <dbReference type="ChEBI" id="CHEBI:17754"/>
        <dbReference type="ChEBI" id="CHEBI:32395"/>
        <dbReference type="ChEBI" id="CHEBI:75612"/>
    </reaction>
</comment>
<comment type="catalytic activity">
    <reaction evidence="1">
        <text>1-(9Z,12Z-octadecadienoyl)-glycerol + H2O = (9Z,12Z)-octadecadienoate + glycerol + H(+)</text>
        <dbReference type="Rhea" id="RHEA:48428"/>
        <dbReference type="ChEBI" id="CHEBI:15377"/>
        <dbReference type="ChEBI" id="CHEBI:15378"/>
        <dbReference type="ChEBI" id="CHEBI:17754"/>
        <dbReference type="ChEBI" id="CHEBI:30245"/>
        <dbReference type="ChEBI" id="CHEBI:75568"/>
    </reaction>
</comment>
<comment type="catalytic activity">
    <reaction evidence="1">
        <text>1-hexadecanoylglycerol + H2O = glycerol + hexadecanoate + H(+)</text>
        <dbReference type="Rhea" id="RHEA:39959"/>
        <dbReference type="ChEBI" id="CHEBI:7896"/>
        <dbReference type="ChEBI" id="CHEBI:15377"/>
        <dbReference type="ChEBI" id="CHEBI:15378"/>
        <dbReference type="ChEBI" id="CHEBI:17754"/>
        <dbReference type="ChEBI" id="CHEBI:69081"/>
    </reaction>
</comment>
<comment type="catalytic activity">
    <reaction evidence="1">
        <text>1-octadecanoylglycerol + H2O = octadecanoate + glycerol + H(+)</text>
        <dbReference type="Rhea" id="RHEA:38363"/>
        <dbReference type="ChEBI" id="CHEBI:15377"/>
        <dbReference type="ChEBI" id="CHEBI:15378"/>
        <dbReference type="ChEBI" id="CHEBI:17754"/>
        <dbReference type="ChEBI" id="CHEBI:25629"/>
        <dbReference type="ChEBI" id="CHEBI:75555"/>
    </reaction>
</comment>
<comment type="catalytic activity">
    <reaction evidence="1">
        <text>1-octadecanoyl-2-(9,10-epoxyoctadecanoyl)-sn-glycero-3-phospho-L-serine + H2O = 9,10-epoxyoctadecanoate + 1-octadecanoyl-sn-glycero-3-phosphoserine + H(+)</text>
        <dbReference type="Rhea" id="RHEA:59364"/>
        <dbReference type="ChEBI" id="CHEBI:15377"/>
        <dbReference type="ChEBI" id="CHEBI:15378"/>
        <dbReference type="ChEBI" id="CHEBI:84467"/>
        <dbReference type="ChEBI" id="CHEBI:85195"/>
        <dbReference type="ChEBI" id="CHEBI:143087"/>
    </reaction>
</comment>
<comment type="catalytic activity">
    <reaction evidence="1">
        <text>1-octadecanoyl-2-(10-hydroxyoctadecanoyl)-sn-glycero-3-phospho-L-serine + H2O = 1-octadecanoyl-sn-glycero-3-phosphoserine + 10-hydroxyoctadecanoate + H(+)</text>
        <dbReference type="Rhea" id="RHEA:59368"/>
        <dbReference type="ChEBI" id="CHEBI:15377"/>
        <dbReference type="ChEBI" id="CHEBI:15378"/>
        <dbReference type="ChEBI" id="CHEBI:84467"/>
        <dbReference type="ChEBI" id="CHEBI:143088"/>
        <dbReference type="ChEBI" id="CHEBI:143089"/>
    </reaction>
</comment>
<comment type="catalytic activity">
    <reaction evidence="1">
        <text>1-hexadecanoyl-2-(10-hydroxyoctadecanoyl)-sn-glycero-3-phospho-L-serine + H2O = 10-hydroxyoctadecanoate + 1-hexadecanoyl-sn-glycero-3-phospho-L-serine + H(+)</text>
        <dbReference type="Rhea" id="RHEA:59372"/>
        <dbReference type="ChEBI" id="CHEBI:15377"/>
        <dbReference type="ChEBI" id="CHEBI:15378"/>
        <dbReference type="ChEBI" id="CHEBI:75020"/>
        <dbReference type="ChEBI" id="CHEBI:143089"/>
        <dbReference type="ChEBI" id="CHEBI:143094"/>
    </reaction>
</comment>
<comment type="subcellular location">
    <subcellularLocation>
        <location evidence="1">Endoplasmic reticulum membrane</location>
        <topology evidence="3">Single-pass membrane protein</topology>
    </subcellularLocation>
</comment>
<comment type="similarity">
    <text evidence="5">Belongs to the serine esterase family.</text>
</comment>
<dbReference type="EC" id="3.1.-.-" evidence="1"/>
<dbReference type="EC" id="3.1.1.23" evidence="1"/>
<dbReference type="EMBL" id="BC168136">
    <property type="protein sequence ID" value="AAI68136.1"/>
    <property type="molecule type" value="mRNA"/>
</dbReference>
<dbReference type="RefSeq" id="NP_001135601.1">
    <property type="nucleotide sequence ID" value="NM_001142129.1"/>
</dbReference>
<dbReference type="SMR" id="B4F753"/>
<dbReference type="FunCoup" id="B4F753">
    <property type="interactions" value="1627"/>
</dbReference>
<dbReference type="STRING" id="8364.ENSXETP00000031326"/>
<dbReference type="ESTHER" id="xentr-abd12">
    <property type="family name" value="ABHD12-PHARC"/>
</dbReference>
<dbReference type="MEROPS" id="S09.939"/>
<dbReference type="GlyCosmos" id="B4F753">
    <property type="glycosylation" value="1 site, No reported glycans"/>
</dbReference>
<dbReference type="PaxDb" id="8364-ENSXETP00000027942"/>
<dbReference type="GeneID" id="100216158"/>
<dbReference type="KEGG" id="xtr:100216158"/>
<dbReference type="AGR" id="Xenbase:XB-GENE-990130"/>
<dbReference type="CTD" id="26090"/>
<dbReference type="Xenbase" id="XB-GENE-990130">
    <property type="gene designation" value="abhd12"/>
</dbReference>
<dbReference type="eggNOG" id="KOG1552">
    <property type="taxonomic scope" value="Eukaryota"/>
</dbReference>
<dbReference type="HOGENOM" id="CLU_029375_1_0_1"/>
<dbReference type="InParanoid" id="B4F753"/>
<dbReference type="OMA" id="YELHNCL"/>
<dbReference type="OrthoDB" id="10249433at2759"/>
<dbReference type="PhylomeDB" id="B4F753"/>
<dbReference type="TreeFam" id="TF315122"/>
<dbReference type="Reactome" id="R-XTR-426048">
    <property type="pathway name" value="Arachidonate production from DAG"/>
</dbReference>
<dbReference type="Proteomes" id="UP000008143">
    <property type="component" value="Chromosome 5"/>
</dbReference>
<dbReference type="Bgee" id="ENSXETG00000012789">
    <property type="expression patterns" value="Expressed in brain and 13 other cell types or tissues"/>
</dbReference>
<dbReference type="GO" id="GO:0005789">
    <property type="term" value="C:endoplasmic reticulum membrane"/>
    <property type="evidence" value="ECO:0000250"/>
    <property type="project" value="UniProtKB"/>
</dbReference>
<dbReference type="GO" id="GO:0016020">
    <property type="term" value="C:membrane"/>
    <property type="evidence" value="ECO:0000250"/>
    <property type="project" value="UniProtKB"/>
</dbReference>
<dbReference type="GO" id="GO:0004622">
    <property type="term" value="F:lysophospholipase activity"/>
    <property type="evidence" value="ECO:0000250"/>
    <property type="project" value="UniProtKB"/>
</dbReference>
<dbReference type="GO" id="GO:0047372">
    <property type="term" value="F:monoacylglycerol lipase activity"/>
    <property type="evidence" value="ECO:0000250"/>
    <property type="project" value="UniProtKB"/>
</dbReference>
<dbReference type="GO" id="GO:0004620">
    <property type="term" value="F:phospholipase activity"/>
    <property type="evidence" value="ECO:0000250"/>
    <property type="project" value="UniProtKB"/>
</dbReference>
<dbReference type="GO" id="GO:0046464">
    <property type="term" value="P:acylglycerol catabolic process"/>
    <property type="evidence" value="ECO:0000250"/>
    <property type="project" value="UniProtKB"/>
</dbReference>
<dbReference type="GO" id="GO:0052651">
    <property type="term" value="P:monoacylglycerol catabolic process"/>
    <property type="evidence" value="ECO:0000250"/>
    <property type="project" value="UniProtKB"/>
</dbReference>
<dbReference type="GO" id="GO:0006660">
    <property type="term" value="P:phosphatidylserine catabolic process"/>
    <property type="evidence" value="ECO:0000250"/>
    <property type="project" value="UniProtKB"/>
</dbReference>
<dbReference type="GO" id="GO:0009395">
    <property type="term" value="P:phospholipid catabolic process"/>
    <property type="evidence" value="ECO:0000250"/>
    <property type="project" value="UniProtKB"/>
</dbReference>
<dbReference type="FunFam" id="3.40.50.1820:FF:000069">
    <property type="entry name" value="monoacylglycerol lipase ABHD12"/>
    <property type="match status" value="1"/>
</dbReference>
<dbReference type="Gene3D" id="3.40.50.1820">
    <property type="entry name" value="alpha/beta hydrolase"/>
    <property type="match status" value="1"/>
</dbReference>
<dbReference type="InterPro" id="IPR000073">
    <property type="entry name" value="AB_hydrolase_1"/>
</dbReference>
<dbReference type="InterPro" id="IPR029058">
    <property type="entry name" value="AB_hydrolase_fold"/>
</dbReference>
<dbReference type="PANTHER" id="PTHR12277">
    <property type="entry name" value="ALPHA/BETA HYDROLASE DOMAIN-CONTAINING PROTEIN"/>
    <property type="match status" value="1"/>
</dbReference>
<dbReference type="PANTHER" id="PTHR12277:SF61">
    <property type="entry name" value="LYSOPHOSPHATIDYLSERINE LIPASE ABHD12"/>
    <property type="match status" value="1"/>
</dbReference>
<dbReference type="Pfam" id="PF00561">
    <property type="entry name" value="Abhydrolase_1"/>
    <property type="match status" value="1"/>
</dbReference>
<dbReference type="SUPFAM" id="SSF53474">
    <property type="entry name" value="alpha/beta-Hydrolases"/>
    <property type="match status" value="1"/>
</dbReference>